<feature type="chain" id="PRO_0000335215" description="DNA mismatch repair protein MutS">
    <location>
        <begin position="1"/>
        <end position="923"/>
    </location>
</feature>
<feature type="binding site" evidence="1">
    <location>
        <begin position="671"/>
        <end position="678"/>
    </location>
    <ligand>
        <name>ATP</name>
        <dbReference type="ChEBI" id="CHEBI:30616"/>
    </ligand>
</feature>
<accession>Q13ED0</accession>
<name>MUTS_RHOPS</name>
<dbReference type="EMBL" id="CP000283">
    <property type="protein sequence ID" value="ABE37559.1"/>
    <property type="molecule type" value="Genomic_DNA"/>
</dbReference>
<dbReference type="SMR" id="Q13ED0"/>
<dbReference type="STRING" id="316057.RPD_0321"/>
<dbReference type="KEGG" id="rpd:RPD_0321"/>
<dbReference type="eggNOG" id="COG0249">
    <property type="taxonomic scope" value="Bacteria"/>
</dbReference>
<dbReference type="HOGENOM" id="CLU_002472_4_0_5"/>
<dbReference type="Proteomes" id="UP000001818">
    <property type="component" value="Chromosome"/>
</dbReference>
<dbReference type="GO" id="GO:0005829">
    <property type="term" value="C:cytosol"/>
    <property type="evidence" value="ECO:0007669"/>
    <property type="project" value="TreeGrafter"/>
</dbReference>
<dbReference type="GO" id="GO:0005524">
    <property type="term" value="F:ATP binding"/>
    <property type="evidence" value="ECO:0007669"/>
    <property type="project" value="UniProtKB-UniRule"/>
</dbReference>
<dbReference type="GO" id="GO:0140664">
    <property type="term" value="F:ATP-dependent DNA damage sensor activity"/>
    <property type="evidence" value="ECO:0007669"/>
    <property type="project" value="InterPro"/>
</dbReference>
<dbReference type="GO" id="GO:0003684">
    <property type="term" value="F:damaged DNA binding"/>
    <property type="evidence" value="ECO:0007669"/>
    <property type="project" value="UniProtKB-UniRule"/>
</dbReference>
<dbReference type="GO" id="GO:0030983">
    <property type="term" value="F:mismatched DNA binding"/>
    <property type="evidence" value="ECO:0007669"/>
    <property type="project" value="InterPro"/>
</dbReference>
<dbReference type="GO" id="GO:0006298">
    <property type="term" value="P:mismatch repair"/>
    <property type="evidence" value="ECO:0007669"/>
    <property type="project" value="UniProtKB-UniRule"/>
</dbReference>
<dbReference type="CDD" id="cd03284">
    <property type="entry name" value="ABC_MutS1"/>
    <property type="match status" value="1"/>
</dbReference>
<dbReference type="FunFam" id="3.40.1170.10:FF:000001">
    <property type="entry name" value="DNA mismatch repair protein MutS"/>
    <property type="match status" value="1"/>
</dbReference>
<dbReference type="FunFam" id="3.40.50.300:FF:001579">
    <property type="entry name" value="DNA mismatch repair protein MutS"/>
    <property type="match status" value="1"/>
</dbReference>
<dbReference type="Gene3D" id="1.10.1420.10">
    <property type="match status" value="2"/>
</dbReference>
<dbReference type="Gene3D" id="6.10.140.430">
    <property type="match status" value="1"/>
</dbReference>
<dbReference type="Gene3D" id="3.40.1170.10">
    <property type="entry name" value="DNA repair protein MutS, domain I"/>
    <property type="match status" value="1"/>
</dbReference>
<dbReference type="Gene3D" id="3.30.420.110">
    <property type="entry name" value="MutS, connector domain"/>
    <property type="match status" value="1"/>
</dbReference>
<dbReference type="Gene3D" id="3.40.50.300">
    <property type="entry name" value="P-loop containing nucleotide triphosphate hydrolases"/>
    <property type="match status" value="1"/>
</dbReference>
<dbReference type="HAMAP" id="MF_00096">
    <property type="entry name" value="MutS"/>
    <property type="match status" value="1"/>
</dbReference>
<dbReference type="InterPro" id="IPR005748">
    <property type="entry name" value="DNA_mismatch_repair_MutS"/>
</dbReference>
<dbReference type="InterPro" id="IPR007695">
    <property type="entry name" value="DNA_mismatch_repair_MutS-lik_N"/>
</dbReference>
<dbReference type="InterPro" id="IPR017261">
    <property type="entry name" value="DNA_mismatch_repair_MutS/MSH"/>
</dbReference>
<dbReference type="InterPro" id="IPR000432">
    <property type="entry name" value="DNA_mismatch_repair_MutS_C"/>
</dbReference>
<dbReference type="InterPro" id="IPR007861">
    <property type="entry name" value="DNA_mismatch_repair_MutS_clamp"/>
</dbReference>
<dbReference type="InterPro" id="IPR007696">
    <property type="entry name" value="DNA_mismatch_repair_MutS_core"/>
</dbReference>
<dbReference type="InterPro" id="IPR016151">
    <property type="entry name" value="DNA_mismatch_repair_MutS_N"/>
</dbReference>
<dbReference type="InterPro" id="IPR036187">
    <property type="entry name" value="DNA_mismatch_repair_MutS_sf"/>
</dbReference>
<dbReference type="InterPro" id="IPR007860">
    <property type="entry name" value="DNA_mmatch_repair_MutS_con_dom"/>
</dbReference>
<dbReference type="InterPro" id="IPR045076">
    <property type="entry name" value="MutS"/>
</dbReference>
<dbReference type="InterPro" id="IPR036678">
    <property type="entry name" value="MutS_con_dom_sf"/>
</dbReference>
<dbReference type="InterPro" id="IPR027417">
    <property type="entry name" value="P-loop_NTPase"/>
</dbReference>
<dbReference type="NCBIfam" id="TIGR01070">
    <property type="entry name" value="mutS1"/>
    <property type="match status" value="1"/>
</dbReference>
<dbReference type="NCBIfam" id="NF003810">
    <property type="entry name" value="PRK05399.1"/>
    <property type="match status" value="1"/>
</dbReference>
<dbReference type="PANTHER" id="PTHR11361:SF34">
    <property type="entry name" value="DNA MISMATCH REPAIR PROTEIN MSH1, MITOCHONDRIAL"/>
    <property type="match status" value="1"/>
</dbReference>
<dbReference type="PANTHER" id="PTHR11361">
    <property type="entry name" value="DNA MISMATCH REPAIR PROTEIN MUTS FAMILY MEMBER"/>
    <property type="match status" value="1"/>
</dbReference>
<dbReference type="Pfam" id="PF01624">
    <property type="entry name" value="MutS_I"/>
    <property type="match status" value="1"/>
</dbReference>
<dbReference type="Pfam" id="PF05188">
    <property type="entry name" value="MutS_II"/>
    <property type="match status" value="1"/>
</dbReference>
<dbReference type="Pfam" id="PF05192">
    <property type="entry name" value="MutS_III"/>
    <property type="match status" value="1"/>
</dbReference>
<dbReference type="Pfam" id="PF05190">
    <property type="entry name" value="MutS_IV"/>
    <property type="match status" value="1"/>
</dbReference>
<dbReference type="Pfam" id="PF00488">
    <property type="entry name" value="MutS_V"/>
    <property type="match status" value="1"/>
</dbReference>
<dbReference type="PIRSF" id="PIRSF037677">
    <property type="entry name" value="DNA_mis_repair_Msh6"/>
    <property type="match status" value="1"/>
</dbReference>
<dbReference type="SMART" id="SM00534">
    <property type="entry name" value="MUTSac"/>
    <property type="match status" value="1"/>
</dbReference>
<dbReference type="SMART" id="SM00533">
    <property type="entry name" value="MUTSd"/>
    <property type="match status" value="1"/>
</dbReference>
<dbReference type="SUPFAM" id="SSF55271">
    <property type="entry name" value="DNA repair protein MutS, domain I"/>
    <property type="match status" value="1"/>
</dbReference>
<dbReference type="SUPFAM" id="SSF53150">
    <property type="entry name" value="DNA repair protein MutS, domain II"/>
    <property type="match status" value="1"/>
</dbReference>
<dbReference type="SUPFAM" id="SSF48334">
    <property type="entry name" value="DNA repair protein MutS, domain III"/>
    <property type="match status" value="1"/>
</dbReference>
<dbReference type="SUPFAM" id="SSF52540">
    <property type="entry name" value="P-loop containing nucleoside triphosphate hydrolases"/>
    <property type="match status" value="1"/>
</dbReference>
<dbReference type="PROSITE" id="PS00486">
    <property type="entry name" value="DNA_MISMATCH_REPAIR_2"/>
    <property type="match status" value="1"/>
</dbReference>
<evidence type="ECO:0000255" key="1">
    <source>
        <dbReference type="HAMAP-Rule" id="MF_00096"/>
    </source>
</evidence>
<protein>
    <recommendedName>
        <fullName evidence="1">DNA mismatch repair protein MutS</fullName>
    </recommendedName>
</protein>
<organism>
    <name type="scientific">Rhodopseudomonas palustris (strain BisB5)</name>
    <dbReference type="NCBI Taxonomy" id="316057"/>
    <lineage>
        <taxon>Bacteria</taxon>
        <taxon>Pseudomonadati</taxon>
        <taxon>Pseudomonadota</taxon>
        <taxon>Alphaproteobacteria</taxon>
        <taxon>Hyphomicrobiales</taxon>
        <taxon>Nitrobacteraceae</taxon>
        <taxon>Rhodopseudomonas</taxon>
    </lineage>
</organism>
<comment type="function">
    <text evidence="1">This protein is involved in the repair of mismatches in DNA. It is possible that it carries out the mismatch recognition step. This protein has a weak ATPase activity.</text>
</comment>
<comment type="similarity">
    <text evidence="1">Belongs to the DNA mismatch repair MutS family.</text>
</comment>
<reference key="1">
    <citation type="submission" date="2006-03" db="EMBL/GenBank/DDBJ databases">
        <title>Complete sequence of Rhodopseudomonas palustris BisB5.</title>
        <authorList>
            <consortium name="US DOE Joint Genome Institute"/>
            <person name="Copeland A."/>
            <person name="Lucas S."/>
            <person name="Lapidus A."/>
            <person name="Barry K."/>
            <person name="Detter J.C."/>
            <person name="Glavina del Rio T."/>
            <person name="Hammon N."/>
            <person name="Israni S."/>
            <person name="Dalin E."/>
            <person name="Tice H."/>
            <person name="Pitluck S."/>
            <person name="Chain P."/>
            <person name="Malfatti S."/>
            <person name="Shin M."/>
            <person name="Vergez L."/>
            <person name="Schmutz J."/>
            <person name="Larimer F."/>
            <person name="Land M."/>
            <person name="Hauser L."/>
            <person name="Pelletier D.A."/>
            <person name="Kyrpides N."/>
            <person name="Lykidis A."/>
            <person name="Oda Y."/>
            <person name="Harwood C.S."/>
            <person name="Richardson P."/>
        </authorList>
    </citation>
    <scope>NUCLEOTIDE SEQUENCE [LARGE SCALE GENOMIC DNA]</scope>
    <source>
        <strain>BisB5</strain>
    </source>
</reference>
<proteinExistence type="inferred from homology"/>
<keyword id="KW-0067">ATP-binding</keyword>
<keyword id="KW-0227">DNA damage</keyword>
<keyword id="KW-0234">DNA repair</keyword>
<keyword id="KW-0238">DNA-binding</keyword>
<keyword id="KW-0547">Nucleotide-binding</keyword>
<gene>
    <name evidence="1" type="primary">mutS</name>
    <name type="ordered locus">RPD_0321</name>
</gene>
<sequence length="923" mass="99051">MHRVMTIRPDIPPQPDIAAPAEPPARVSPMMEQYHEIKAANPGLLLFYRMGDFYELFFEDAEIASRALGITLTKRGKHLGADIPMCGVPVERSDDYLHRLIALGHRVAVCEQTEDPAAARARKSVVRRDVVRLITPGTLTEDTLLDARANNYLMAIARTRGSAGVDRIGLAWIDISTGEFCVTECATGELSATLARINPNEAIVSDALYSDAELGPSLRELAAVTPLTRDVFDSATAERRLCDYFAVATMDGLAALSRLEAAAAAACVTYVDRTQLGKRPPLSPPAREAAGATMAIDPATRANLELTRTLGGERRGSLLDAIDCTVTAAGSRLLAQRLAAPLTDEAAIARRLDAVAAFVADSALREQIRSALRAAPDMARALARLSLGRGGPRDLASLRDGVSAADKVLAQLSQLAQPPHDIAAAMAALRRPSRDLCQELARALADDLPLLKRDGGFVRDGYEAALDETRKLRDASRLVVAAMQARYADETGVKGLKIRHNNVLGYFVEVTAQHGDRLMAPPLNATFIHRQTLAGQVRFTTAELGEIEAKIANAGDRALGLELDIFDRLAAMIDTAGDDLRAAAHAFALLDVATALAKLAVSDNYVRPEVDGSLAFAIEGGRHPVVEQALKRAGEPFIANACDLSPVPPPFPPPLAGEGRVGAGQIWLLTGPNMAGKSTFLRQNALIALLAQTGSFVPASRARIGIVDRLFSRVGAADDLARGRSTFMVEMVETATILNQATERALVILDEIGRGTATFDGLSIAWAAIEHLHEQNRCRALFATHYHELTALSAKLPRLFNATVRVKEWRGEVVFLHEVLPGSADRSYGIQVAKLAGLPPSVVARAKSVLAKLEANDRGQSARTLADDLPLFAMTARAPVEPPPPSEAEQLIEAVRALHPDELSPREALDALYALKAKLPKAD</sequence>